<evidence type="ECO:0000255" key="1"/>
<evidence type="ECO:0000256" key="2">
    <source>
        <dbReference type="SAM" id="MobiDB-lite"/>
    </source>
</evidence>
<evidence type="ECO:0000305" key="3"/>
<organism>
    <name type="scientific">Oryza sativa subsp. japonica</name>
    <name type="common">Rice</name>
    <dbReference type="NCBI Taxonomy" id="39947"/>
    <lineage>
        <taxon>Eukaryota</taxon>
        <taxon>Viridiplantae</taxon>
        <taxon>Streptophyta</taxon>
        <taxon>Embryophyta</taxon>
        <taxon>Tracheophyta</taxon>
        <taxon>Spermatophyta</taxon>
        <taxon>Magnoliopsida</taxon>
        <taxon>Liliopsida</taxon>
        <taxon>Poales</taxon>
        <taxon>Poaceae</taxon>
        <taxon>BOP clade</taxon>
        <taxon>Oryzoideae</taxon>
        <taxon>Oryzeae</taxon>
        <taxon>Oryzinae</taxon>
        <taxon>Oryza</taxon>
        <taxon>Oryza sativa</taxon>
    </lineage>
</organism>
<name>GRP2_ORYSJ</name>
<feature type="signal peptide" evidence="1">
    <location>
        <begin position="1"/>
        <end position="27"/>
    </location>
</feature>
<feature type="chain" id="PRO_0000021380" description="Glycine-rich cell wall structural protein 2">
    <location>
        <begin position="28"/>
        <end position="185"/>
    </location>
</feature>
<feature type="region of interest" description="Disordered" evidence="2">
    <location>
        <begin position="149"/>
        <end position="185"/>
    </location>
</feature>
<reference key="1">
    <citation type="journal article" date="2003" name="Science">
        <title>In-depth view of structure, activity, and evolution of rice chromosome 10.</title>
        <authorList>
            <person name="Yu Y."/>
            <person name="Rambo T."/>
            <person name="Currie J."/>
            <person name="Saski C."/>
            <person name="Kim H.-R."/>
            <person name="Collura K."/>
            <person name="Thompson S."/>
            <person name="Simmons J."/>
            <person name="Yang T.-J."/>
            <person name="Nah G."/>
            <person name="Patel A.J."/>
            <person name="Thurmond S."/>
            <person name="Henry D."/>
            <person name="Oates R."/>
            <person name="Palmer M."/>
            <person name="Pries G."/>
            <person name="Gibson J."/>
            <person name="Anderson H."/>
            <person name="Paradkar M."/>
            <person name="Crane L."/>
            <person name="Dale J."/>
            <person name="Carver M.B."/>
            <person name="Wood T."/>
            <person name="Frisch D."/>
            <person name="Engler F."/>
            <person name="Soderlund C."/>
            <person name="Palmer L.E."/>
            <person name="Teytelman L."/>
            <person name="Nascimento L."/>
            <person name="De la Bastide M."/>
            <person name="Spiegel L."/>
            <person name="Ware D."/>
            <person name="O'Shaughnessy A."/>
            <person name="Dike S."/>
            <person name="Dedhia N."/>
            <person name="Preston R."/>
            <person name="Huang E."/>
            <person name="Ferraro K."/>
            <person name="Kuit K."/>
            <person name="Miller B."/>
            <person name="Zutavern T."/>
            <person name="Katzenberger F."/>
            <person name="Muller S."/>
            <person name="Balija V."/>
            <person name="Martienssen R.A."/>
            <person name="Stein L."/>
            <person name="Minx P."/>
            <person name="Johnson D."/>
            <person name="Cordum H."/>
            <person name="Mardis E."/>
            <person name="Cheng Z."/>
            <person name="Jiang J."/>
            <person name="Wilson R."/>
            <person name="McCombie W.R."/>
            <person name="Wing R.A."/>
            <person name="Yuan Q."/>
            <person name="Ouyang S."/>
            <person name="Liu J."/>
            <person name="Jones K.M."/>
            <person name="Gansberger K."/>
            <person name="Moffat K."/>
            <person name="Hill J."/>
            <person name="Tsitrin T."/>
            <person name="Overton L."/>
            <person name="Bera J."/>
            <person name="Kim M."/>
            <person name="Jin S."/>
            <person name="Tallon L."/>
            <person name="Ciecko A."/>
            <person name="Pai G."/>
            <person name="Van Aken S."/>
            <person name="Utterback T."/>
            <person name="Reidmuller S."/>
            <person name="Bormann J."/>
            <person name="Feldblyum T."/>
            <person name="Hsiao J."/>
            <person name="Zismann V."/>
            <person name="Blunt S."/>
            <person name="de Vazeille A.R."/>
            <person name="Shaffer T."/>
            <person name="Koo H."/>
            <person name="Suh B."/>
            <person name="Yang Q."/>
            <person name="Haas B."/>
            <person name="Peterson J."/>
            <person name="Pertea M."/>
            <person name="Volfovsky N."/>
            <person name="Wortman J."/>
            <person name="White O."/>
            <person name="Salzberg S.L."/>
            <person name="Fraser C.M."/>
            <person name="Buell C.R."/>
            <person name="Messing J."/>
            <person name="Song R."/>
            <person name="Fuks G."/>
            <person name="Llaca V."/>
            <person name="Kovchak S."/>
            <person name="Young S."/>
            <person name="Bowers J.E."/>
            <person name="Paterson A.H."/>
            <person name="Johns M.A."/>
            <person name="Mao L."/>
            <person name="Pan H."/>
            <person name="Dean R.A."/>
        </authorList>
    </citation>
    <scope>NUCLEOTIDE SEQUENCE [LARGE SCALE GENOMIC DNA]</scope>
    <source>
        <strain>cv. Nipponbare</strain>
    </source>
</reference>
<reference key="2">
    <citation type="journal article" date="2005" name="Nature">
        <title>The map-based sequence of the rice genome.</title>
        <authorList>
            <consortium name="International rice genome sequencing project (IRGSP)"/>
        </authorList>
    </citation>
    <scope>NUCLEOTIDE SEQUENCE [LARGE SCALE GENOMIC DNA]</scope>
    <source>
        <strain>cv. Nipponbare</strain>
    </source>
</reference>
<reference key="3">
    <citation type="journal article" date="2008" name="Nucleic Acids Res.">
        <title>The rice annotation project database (RAP-DB): 2008 update.</title>
        <authorList>
            <consortium name="The rice annotation project (RAP)"/>
        </authorList>
    </citation>
    <scope>GENOME REANNOTATION</scope>
    <source>
        <strain>cv. Nipponbare</strain>
    </source>
</reference>
<reference key="4">
    <citation type="journal article" date="2013" name="Rice">
        <title>Improvement of the Oryza sativa Nipponbare reference genome using next generation sequence and optical map data.</title>
        <authorList>
            <person name="Kawahara Y."/>
            <person name="de la Bastide M."/>
            <person name="Hamilton J.P."/>
            <person name="Kanamori H."/>
            <person name="McCombie W.R."/>
            <person name="Ouyang S."/>
            <person name="Schwartz D.C."/>
            <person name="Tanaka T."/>
            <person name="Wu J."/>
            <person name="Zhou S."/>
            <person name="Childs K.L."/>
            <person name="Davidson R.M."/>
            <person name="Lin H."/>
            <person name="Quesada-Ocampo L."/>
            <person name="Vaillancourt B."/>
            <person name="Sakai H."/>
            <person name="Lee S.S."/>
            <person name="Kim J."/>
            <person name="Numa H."/>
            <person name="Itoh T."/>
            <person name="Buell C.R."/>
            <person name="Matsumoto T."/>
        </authorList>
    </citation>
    <scope>GENOME REANNOTATION</scope>
    <source>
        <strain>cv. Nipponbare</strain>
    </source>
</reference>
<reference key="5">
    <citation type="journal article" date="2005" name="PLoS Biol.">
        <title>The genomes of Oryza sativa: a history of duplications.</title>
        <authorList>
            <person name="Yu J."/>
            <person name="Wang J."/>
            <person name="Lin W."/>
            <person name="Li S."/>
            <person name="Li H."/>
            <person name="Zhou J."/>
            <person name="Ni P."/>
            <person name="Dong W."/>
            <person name="Hu S."/>
            <person name="Zeng C."/>
            <person name="Zhang J."/>
            <person name="Zhang Y."/>
            <person name="Li R."/>
            <person name="Xu Z."/>
            <person name="Li S."/>
            <person name="Li X."/>
            <person name="Zheng H."/>
            <person name="Cong L."/>
            <person name="Lin L."/>
            <person name="Yin J."/>
            <person name="Geng J."/>
            <person name="Li G."/>
            <person name="Shi J."/>
            <person name="Liu J."/>
            <person name="Lv H."/>
            <person name="Li J."/>
            <person name="Wang J."/>
            <person name="Deng Y."/>
            <person name="Ran L."/>
            <person name="Shi X."/>
            <person name="Wang X."/>
            <person name="Wu Q."/>
            <person name="Li C."/>
            <person name="Ren X."/>
            <person name="Wang J."/>
            <person name="Wang X."/>
            <person name="Li D."/>
            <person name="Liu D."/>
            <person name="Zhang X."/>
            <person name="Ji Z."/>
            <person name="Zhao W."/>
            <person name="Sun Y."/>
            <person name="Zhang Z."/>
            <person name="Bao J."/>
            <person name="Han Y."/>
            <person name="Dong L."/>
            <person name="Ji J."/>
            <person name="Chen P."/>
            <person name="Wu S."/>
            <person name="Liu J."/>
            <person name="Xiao Y."/>
            <person name="Bu D."/>
            <person name="Tan J."/>
            <person name="Yang L."/>
            <person name="Ye C."/>
            <person name="Zhang J."/>
            <person name="Xu J."/>
            <person name="Zhou Y."/>
            <person name="Yu Y."/>
            <person name="Zhang B."/>
            <person name="Zhuang S."/>
            <person name="Wei H."/>
            <person name="Liu B."/>
            <person name="Lei M."/>
            <person name="Yu H."/>
            <person name="Li Y."/>
            <person name="Xu H."/>
            <person name="Wei S."/>
            <person name="He X."/>
            <person name="Fang L."/>
            <person name="Zhang Z."/>
            <person name="Zhang Y."/>
            <person name="Huang X."/>
            <person name="Su Z."/>
            <person name="Tong W."/>
            <person name="Li J."/>
            <person name="Tong Z."/>
            <person name="Li S."/>
            <person name="Ye J."/>
            <person name="Wang L."/>
            <person name="Fang L."/>
            <person name="Lei T."/>
            <person name="Chen C.-S."/>
            <person name="Chen H.-C."/>
            <person name="Xu Z."/>
            <person name="Li H."/>
            <person name="Huang H."/>
            <person name="Zhang F."/>
            <person name="Xu H."/>
            <person name="Li N."/>
            <person name="Zhao C."/>
            <person name="Li S."/>
            <person name="Dong L."/>
            <person name="Huang Y."/>
            <person name="Li L."/>
            <person name="Xi Y."/>
            <person name="Qi Q."/>
            <person name="Li W."/>
            <person name="Zhang B."/>
            <person name="Hu W."/>
            <person name="Zhang Y."/>
            <person name="Tian X."/>
            <person name="Jiao Y."/>
            <person name="Liang X."/>
            <person name="Jin J."/>
            <person name="Gao L."/>
            <person name="Zheng W."/>
            <person name="Hao B."/>
            <person name="Liu S.-M."/>
            <person name="Wang W."/>
            <person name="Yuan L."/>
            <person name="Cao M."/>
            <person name="McDermott J."/>
            <person name="Samudrala R."/>
            <person name="Wang J."/>
            <person name="Wong G.K.-S."/>
            <person name="Yang H."/>
        </authorList>
    </citation>
    <scope>NUCLEOTIDE SEQUENCE [LARGE SCALE GENOMIC DNA]</scope>
    <source>
        <strain>cv. Nipponbare</strain>
    </source>
</reference>
<reference key="6">
    <citation type="journal article" date="2003" name="Science">
        <title>Collection, mapping, and annotation of over 28,000 cDNA clones from japonica rice.</title>
        <authorList>
            <consortium name="The rice full-length cDNA consortium"/>
        </authorList>
    </citation>
    <scope>NUCLEOTIDE SEQUENCE [LARGE SCALE MRNA]</scope>
    <source>
        <strain>cv. Nipponbare</strain>
    </source>
</reference>
<dbReference type="EMBL" id="DP000086">
    <property type="protein sequence ID" value="AAP54040.1"/>
    <property type="molecule type" value="Genomic_DNA"/>
</dbReference>
<dbReference type="EMBL" id="DP000086">
    <property type="protein sequence ID" value="ABB47739.1"/>
    <property type="status" value="ALT_SEQ"/>
    <property type="molecule type" value="Genomic_DNA"/>
</dbReference>
<dbReference type="EMBL" id="DP000086">
    <property type="protein sequence ID" value="ABG66108.1"/>
    <property type="status" value="ALT_SEQ"/>
    <property type="molecule type" value="Genomic_DNA"/>
</dbReference>
<dbReference type="EMBL" id="AP008216">
    <property type="protein sequence ID" value="BAF26643.1"/>
    <property type="molecule type" value="Genomic_DNA"/>
</dbReference>
<dbReference type="EMBL" id="AP014966">
    <property type="protein sequence ID" value="BAT11103.1"/>
    <property type="molecule type" value="Genomic_DNA"/>
</dbReference>
<dbReference type="EMBL" id="CM000147">
    <property type="protein sequence ID" value="EAZ16270.1"/>
    <property type="molecule type" value="Genomic_DNA"/>
</dbReference>
<dbReference type="EMBL" id="AK119244">
    <property type="status" value="NOT_ANNOTATED_CDS"/>
    <property type="molecule type" value="mRNA"/>
</dbReference>
<dbReference type="STRING" id="39947.A3C5A7"/>
<dbReference type="PaxDb" id="39947-A3C5A7"/>
<dbReference type="EnsemblPlants" id="Os10t0450900-02">
    <property type="protein sequence ID" value="Os10t0450900-02"/>
    <property type="gene ID" value="Os10g0450900"/>
</dbReference>
<dbReference type="Gramene" id="Os10t0450900-02">
    <property type="protein sequence ID" value="Os10t0450900-02"/>
    <property type="gene ID" value="Os10g0450900"/>
</dbReference>
<dbReference type="KEGG" id="dosa:Os10g0450900"/>
<dbReference type="eggNOG" id="ENOG502QU0K">
    <property type="taxonomic scope" value="Eukaryota"/>
</dbReference>
<dbReference type="HOGENOM" id="CLU_090460_0_0_1"/>
<dbReference type="InParanoid" id="A3C5A7"/>
<dbReference type="OMA" id="DICLAAR"/>
<dbReference type="Proteomes" id="UP000000763">
    <property type="component" value="Chromosome 10"/>
</dbReference>
<dbReference type="Proteomes" id="UP000007752">
    <property type="component" value="Chromosome 10"/>
</dbReference>
<dbReference type="Proteomes" id="UP000059680">
    <property type="component" value="Chromosome 10"/>
</dbReference>
<dbReference type="GO" id="GO:0005576">
    <property type="term" value="C:extracellular region"/>
    <property type="evidence" value="ECO:0007669"/>
    <property type="project" value="UniProtKB-KW"/>
</dbReference>
<dbReference type="GO" id="GO:0071555">
    <property type="term" value="P:cell wall organization"/>
    <property type="evidence" value="ECO:0007669"/>
    <property type="project" value="UniProtKB-KW"/>
</dbReference>
<dbReference type="InterPro" id="IPR040417">
    <property type="entry name" value="GRP1/2"/>
</dbReference>
<dbReference type="PANTHER" id="PTHR33548">
    <property type="entry name" value="GLYCINE-RICH CELL WALL STRUCTURAL PROTEIN 2"/>
    <property type="match status" value="1"/>
</dbReference>
<dbReference type="PRINTS" id="PR01228">
    <property type="entry name" value="EGGSHELL"/>
</dbReference>
<protein>
    <recommendedName>
        <fullName>Glycine-rich cell wall structural protein 2</fullName>
    </recommendedName>
    <alternativeName>
        <fullName>Glycine-rich protein 1</fullName>
        <shortName>GRP-1</shortName>
    </alternativeName>
</protein>
<comment type="function">
    <text evidence="3">Responsible for plasticity of the cell wall.</text>
</comment>
<comment type="subcellular location">
    <subcellularLocation>
        <location evidence="3">Secreted</location>
        <location evidence="3">Cell wall</location>
    </subcellularLocation>
</comment>
<comment type="sequence caution" evidence="3">
    <conflict type="erroneous gene model prediction">
        <sequence resource="EMBL-CDS" id="ABB47739"/>
    </conflict>
</comment>
<comment type="sequence caution" evidence="3">
    <conflict type="erroneous gene model prediction">
        <sequence resource="EMBL-CDS" id="ABG66108"/>
    </conflict>
</comment>
<keyword id="KW-0134">Cell wall</keyword>
<keyword id="KW-0961">Cell wall biogenesis/degradation</keyword>
<keyword id="KW-1185">Reference proteome</keyword>
<keyword id="KW-0677">Repeat</keyword>
<keyword id="KW-0964">Secreted</keyword>
<keyword id="KW-0732">Signal</keyword>
<gene>
    <name type="primary">GRP0.9</name>
    <name type="synonym">GRP1</name>
    <name type="ordered locus">Os10g0450900</name>
    <name type="ordered locus">LOC_Os10g31330</name>
    <name type="ORF">OsJ_030479</name>
</gene>
<sequence length="185" mass="14882">MATTKHLALAILVLLSIGMTTSARTLLGYGPGGGGGGGGGGEGGGGGYGGSGYGSGSGYGEGGGSGGAAGGGYGRGGGGGGGGGEGGGSGSGYGSGQGSGYGAGVGGAGGYGSGGGGGGGQGGGAGGYGQGSGYGSGYGSGAGGAHGGGYGSGGGGGGGGGQGGGSGSGSGSGYGSGSGGGNGHH</sequence>
<proteinExistence type="evidence at transcript level"/>
<accession>A3C5A7</accession>
<accession>A0A0P0XUR9</accession>
<accession>P29834</accession>
<accession>Q0IXC2</accession>
<accession>Q109L9</accession>
<accession>Q337Q1</accession>
<accession>Q7XDV1</accession>